<proteinExistence type="inferred from homology"/>
<dbReference type="EC" id="3.5.1.88" evidence="1"/>
<dbReference type="EMBL" id="AP006841">
    <property type="protein sequence ID" value="BAD48431.1"/>
    <property type="molecule type" value="Genomic_DNA"/>
</dbReference>
<dbReference type="RefSeq" id="WP_005786565.1">
    <property type="nucleotide sequence ID" value="NZ_UYXF01000008.1"/>
</dbReference>
<dbReference type="RefSeq" id="YP_098965.1">
    <property type="nucleotide sequence ID" value="NC_006347.1"/>
</dbReference>
<dbReference type="SMR" id="Q64VP5"/>
<dbReference type="STRING" id="295405.BF1684"/>
<dbReference type="GeneID" id="60369871"/>
<dbReference type="KEGG" id="bfr:BF1684"/>
<dbReference type="PATRIC" id="fig|295405.11.peg.1636"/>
<dbReference type="HOGENOM" id="CLU_061901_2_0_10"/>
<dbReference type="OrthoDB" id="9784988at2"/>
<dbReference type="Proteomes" id="UP000002197">
    <property type="component" value="Chromosome"/>
</dbReference>
<dbReference type="GO" id="GO:0046872">
    <property type="term" value="F:metal ion binding"/>
    <property type="evidence" value="ECO:0007669"/>
    <property type="project" value="UniProtKB-KW"/>
</dbReference>
<dbReference type="GO" id="GO:0042586">
    <property type="term" value="F:peptide deformylase activity"/>
    <property type="evidence" value="ECO:0007669"/>
    <property type="project" value="UniProtKB-UniRule"/>
</dbReference>
<dbReference type="GO" id="GO:0043686">
    <property type="term" value="P:co-translational protein modification"/>
    <property type="evidence" value="ECO:0007669"/>
    <property type="project" value="TreeGrafter"/>
</dbReference>
<dbReference type="GO" id="GO:0006412">
    <property type="term" value="P:translation"/>
    <property type="evidence" value="ECO:0007669"/>
    <property type="project" value="UniProtKB-UniRule"/>
</dbReference>
<dbReference type="CDD" id="cd00487">
    <property type="entry name" value="Pep_deformylase"/>
    <property type="match status" value="1"/>
</dbReference>
<dbReference type="Gene3D" id="3.90.45.10">
    <property type="entry name" value="Peptide deformylase"/>
    <property type="match status" value="1"/>
</dbReference>
<dbReference type="HAMAP" id="MF_00163">
    <property type="entry name" value="Pep_deformylase"/>
    <property type="match status" value="1"/>
</dbReference>
<dbReference type="InterPro" id="IPR023635">
    <property type="entry name" value="Peptide_deformylase"/>
</dbReference>
<dbReference type="InterPro" id="IPR036821">
    <property type="entry name" value="Peptide_deformylase_sf"/>
</dbReference>
<dbReference type="NCBIfam" id="TIGR00079">
    <property type="entry name" value="pept_deformyl"/>
    <property type="match status" value="1"/>
</dbReference>
<dbReference type="NCBIfam" id="NF001159">
    <property type="entry name" value="PRK00150.1-3"/>
    <property type="match status" value="1"/>
</dbReference>
<dbReference type="PANTHER" id="PTHR10458">
    <property type="entry name" value="PEPTIDE DEFORMYLASE"/>
    <property type="match status" value="1"/>
</dbReference>
<dbReference type="PANTHER" id="PTHR10458:SF22">
    <property type="entry name" value="PEPTIDE DEFORMYLASE"/>
    <property type="match status" value="1"/>
</dbReference>
<dbReference type="Pfam" id="PF01327">
    <property type="entry name" value="Pep_deformylase"/>
    <property type="match status" value="1"/>
</dbReference>
<dbReference type="PIRSF" id="PIRSF004749">
    <property type="entry name" value="Pep_def"/>
    <property type="match status" value="1"/>
</dbReference>
<dbReference type="PRINTS" id="PR01576">
    <property type="entry name" value="PDEFORMYLASE"/>
</dbReference>
<dbReference type="SUPFAM" id="SSF56420">
    <property type="entry name" value="Peptide deformylase"/>
    <property type="match status" value="1"/>
</dbReference>
<organism>
    <name type="scientific">Bacteroides fragilis (strain YCH46)</name>
    <dbReference type="NCBI Taxonomy" id="295405"/>
    <lineage>
        <taxon>Bacteria</taxon>
        <taxon>Pseudomonadati</taxon>
        <taxon>Bacteroidota</taxon>
        <taxon>Bacteroidia</taxon>
        <taxon>Bacteroidales</taxon>
        <taxon>Bacteroidaceae</taxon>
        <taxon>Bacteroides</taxon>
    </lineage>
</organism>
<protein>
    <recommendedName>
        <fullName evidence="1">Peptide deformylase</fullName>
        <shortName evidence="1">PDF</shortName>
        <ecNumber evidence="1">3.5.1.88</ecNumber>
    </recommendedName>
    <alternativeName>
        <fullName evidence="1">Polypeptide deformylase</fullName>
    </alternativeName>
</protein>
<gene>
    <name evidence="1" type="primary">def</name>
    <name type="ordered locus">BF1684</name>
</gene>
<accession>Q64VP5</accession>
<feature type="chain" id="PRO_0000301003" description="Peptide deformylase">
    <location>
        <begin position="1"/>
        <end position="184"/>
    </location>
</feature>
<feature type="active site" evidence="1">
    <location>
        <position position="141"/>
    </location>
</feature>
<feature type="binding site" evidence="1">
    <location>
        <position position="98"/>
    </location>
    <ligand>
        <name>Fe cation</name>
        <dbReference type="ChEBI" id="CHEBI:24875"/>
    </ligand>
</feature>
<feature type="binding site" evidence="1">
    <location>
        <position position="140"/>
    </location>
    <ligand>
        <name>Fe cation</name>
        <dbReference type="ChEBI" id="CHEBI:24875"/>
    </ligand>
</feature>
<feature type="binding site" evidence="1">
    <location>
        <position position="144"/>
    </location>
    <ligand>
        <name>Fe cation</name>
        <dbReference type="ChEBI" id="CHEBI:24875"/>
    </ligand>
</feature>
<sequence>MILPIYVYGQPVLRQVAEDITVDYPNLKELIENMFETMDHADGVGLAAPQIGLPIRVVVINLDVLSEDYPEYKDFRKAYINAHIDVVEGEEVSMEEGCLSLPGIHESVKRGSKIHVRYMDENFVEHNEVVEGFLARVMQHEFDHLDGKMFIDHISPLRKQMIKGKLNTMLKGKARSSYKMKQVK</sequence>
<comment type="function">
    <text evidence="1">Removes the formyl group from the N-terminal Met of newly synthesized proteins. Requires at least a dipeptide for an efficient rate of reaction. N-terminal L-methionine is a prerequisite for activity but the enzyme has broad specificity at other positions.</text>
</comment>
<comment type="catalytic activity">
    <reaction evidence="1">
        <text>N-terminal N-formyl-L-methionyl-[peptide] + H2O = N-terminal L-methionyl-[peptide] + formate</text>
        <dbReference type="Rhea" id="RHEA:24420"/>
        <dbReference type="Rhea" id="RHEA-COMP:10639"/>
        <dbReference type="Rhea" id="RHEA-COMP:10640"/>
        <dbReference type="ChEBI" id="CHEBI:15377"/>
        <dbReference type="ChEBI" id="CHEBI:15740"/>
        <dbReference type="ChEBI" id="CHEBI:49298"/>
        <dbReference type="ChEBI" id="CHEBI:64731"/>
        <dbReference type="EC" id="3.5.1.88"/>
    </reaction>
</comment>
<comment type="cofactor">
    <cofactor evidence="1">
        <name>Fe(2+)</name>
        <dbReference type="ChEBI" id="CHEBI:29033"/>
    </cofactor>
    <text evidence="1">Binds 1 Fe(2+) ion.</text>
</comment>
<comment type="similarity">
    <text evidence="1">Belongs to the polypeptide deformylase family.</text>
</comment>
<keyword id="KW-0378">Hydrolase</keyword>
<keyword id="KW-0408">Iron</keyword>
<keyword id="KW-0479">Metal-binding</keyword>
<keyword id="KW-0648">Protein biosynthesis</keyword>
<reference key="1">
    <citation type="journal article" date="2004" name="Proc. Natl. Acad. Sci. U.S.A.">
        <title>Genomic analysis of Bacteroides fragilis reveals extensive DNA inversions regulating cell surface adaptation.</title>
        <authorList>
            <person name="Kuwahara T."/>
            <person name="Yamashita A."/>
            <person name="Hirakawa H."/>
            <person name="Nakayama H."/>
            <person name="Toh H."/>
            <person name="Okada N."/>
            <person name="Kuhara S."/>
            <person name="Hattori M."/>
            <person name="Hayashi T."/>
            <person name="Ohnishi Y."/>
        </authorList>
    </citation>
    <scope>NUCLEOTIDE SEQUENCE [LARGE SCALE GENOMIC DNA]</scope>
    <source>
        <strain>YCH46</strain>
    </source>
</reference>
<name>DEF_BACFR</name>
<evidence type="ECO:0000255" key="1">
    <source>
        <dbReference type="HAMAP-Rule" id="MF_00163"/>
    </source>
</evidence>